<gene>
    <name type="primary">iucC</name>
</gene>
<comment type="function">
    <text evidence="1">Catalyzes the attachment of the second N-acetyl-N-hydroxylysine to the carboxylic group of N-citryl-N-acetyl-N-hydroxylysine to yield aerobactin. Involved in the biosynthesis of the siderophore aerobactin which is a chelator that mediates the high-affinity iron transport systems induced under iron-stressed conditions.</text>
</comment>
<comment type="catalytic activity">
    <reaction>
        <text>N(2)-citryl-N(6)-acetyl-N(6)-hydroxy-L-lysine + N(6)-acetyl-N(6)-hydroxy-L-lysine + ATP = aerobactin + AMP + diphosphate + H(+)</text>
        <dbReference type="Rhea" id="RHEA:32167"/>
        <dbReference type="ChEBI" id="CHEBI:15378"/>
        <dbReference type="ChEBI" id="CHEBI:30616"/>
        <dbReference type="ChEBI" id="CHEBI:33019"/>
        <dbReference type="ChEBI" id="CHEBI:58122"/>
        <dbReference type="ChEBI" id="CHEBI:58396"/>
        <dbReference type="ChEBI" id="CHEBI:63796"/>
        <dbReference type="ChEBI" id="CHEBI:456215"/>
        <dbReference type="EC" id="6.3.2.39"/>
    </reaction>
</comment>
<comment type="pathway">
    <text>Siderophore biosynthesis; aerobactin biosynthesis.</text>
</comment>
<comment type="disruption phenotype">
    <text evidence="1">Cells lacking this gene are not able to produce aerobactin and accumulate N-citryl-N-acetyl-N-hydroxylysine.</text>
</comment>
<comment type="similarity">
    <text evidence="2">Belongs to the IucA/IucC family.</text>
</comment>
<organism>
    <name type="scientific">Escherichia coli</name>
    <dbReference type="NCBI Taxonomy" id="562"/>
    <lineage>
        <taxon>Bacteria</taxon>
        <taxon>Pseudomonadati</taxon>
        <taxon>Pseudomonadota</taxon>
        <taxon>Gammaproteobacteria</taxon>
        <taxon>Enterobacterales</taxon>
        <taxon>Enterobacteriaceae</taxon>
        <taxon>Escherichia</taxon>
    </lineage>
</organism>
<evidence type="ECO:0000269" key="1">
    <source>
    </source>
</evidence>
<evidence type="ECO:0000305" key="2"/>
<feature type="chain" id="PRO_0000415793" description="Aerobactin synthase">
    <location>
        <begin position="1"/>
        <end position="580"/>
    </location>
</feature>
<keyword id="KW-0067">ATP-binding</keyword>
<keyword id="KW-0436">Ligase</keyword>
<keyword id="KW-0547">Nucleotide-binding</keyword>
<keyword id="KW-0614">Plasmid</keyword>
<keyword id="KW-0808">Transferase</keyword>
<geneLocation type="plasmid">
    <name>IncFI ColV3-K30</name>
</geneLocation>
<name>IUCC_ECOLX</name>
<accession>Q47318</accession>
<reference key="1">
    <citation type="journal article" date="1994" name="J. Mol. Biol.">
        <title>The organization of intercistronic regions of the aerobactin operon of pColV-K30 may account for the differential expression of the iucABCD iutA genes.</title>
        <authorList>
            <person name="Martinez J.L."/>
            <person name="Herrero M."/>
            <person name="de Lorenzo V."/>
        </authorList>
    </citation>
    <scope>NUCLEOTIDE SEQUENCE [GENOMIC DNA]</scope>
</reference>
<reference key="2">
    <citation type="journal article" date="1986" name="J. Bacteriol.">
        <title>Aerobactin biosynthesis and transport genes of plasmid ColV-K30 in Escherichia coli K-12.</title>
        <authorList>
            <person name="de Lorenzo V."/>
            <person name="Bindereif A."/>
            <person name="Paw B.H."/>
            <person name="Neilands J.B."/>
        </authorList>
    </citation>
    <scope>NOMENCLATURE</scope>
</reference>
<reference key="3">
    <citation type="journal article" date="1986" name="J. Bacteriol.">
        <title>Characterization of iucA and iucC genes of the aerobactin system of plasmid ColV-K30 in Escherichia coli.</title>
        <authorList>
            <person name="de Lorenzo V."/>
            <person name="Neilands J.B."/>
        </authorList>
    </citation>
    <scope>FUNCTION IN AEROBACTIN BIOSYNTHESIS</scope>
    <scope>DISRUPTION PHENOTYPE</scope>
</reference>
<protein>
    <recommendedName>
        <fullName>Aerobactin synthase</fullName>
        <ecNumber>6.3.2.39</ecNumber>
    </recommendedName>
</protein>
<dbReference type="EC" id="6.3.2.39"/>
<dbReference type="EMBL" id="X76100">
    <property type="protein sequence ID" value="CAA53709.1"/>
    <property type="molecule type" value="Genomic_DNA"/>
</dbReference>
<dbReference type="PIR" id="S50883">
    <property type="entry name" value="S50883"/>
</dbReference>
<dbReference type="SMR" id="Q47318"/>
<dbReference type="KEGG" id="ag:CAA53709"/>
<dbReference type="BioCyc" id="MetaCyc:MONOMER-11596"/>
<dbReference type="BRENDA" id="6.3.2.39">
    <property type="organism ID" value="2026"/>
</dbReference>
<dbReference type="UniPathway" id="UPA00014"/>
<dbReference type="GO" id="GO:0050565">
    <property type="term" value="F:aerobactin synthase activity"/>
    <property type="evidence" value="ECO:0000315"/>
    <property type="project" value="UniProtKB"/>
</dbReference>
<dbReference type="GO" id="GO:0005524">
    <property type="term" value="F:ATP binding"/>
    <property type="evidence" value="ECO:0007669"/>
    <property type="project" value="UniProtKB-KW"/>
</dbReference>
<dbReference type="GO" id="GO:0016740">
    <property type="term" value="F:transferase activity"/>
    <property type="evidence" value="ECO:0007669"/>
    <property type="project" value="UniProtKB-KW"/>
</dbReference>
<dbReference type="GO" id="GO:0019270">
    <property type="term" value="P:aerobactin biosynthetic process"/>
    <property type="evidence" value="ECO:0000315"/>
    <property type="project" value="UniProtKB"/>
</dbReference>
<dbReference type="GO" id="GO:0019290">
    <property type="term" value="P:siderophore biosynthetic process"/>
    <property type="evidence" value="ECO:0007669"/>
    <property type="project" value="InterPro"/>
</dbReference>
<dbReference type="FunFam" id="1.10.510.40:FF:000001">
    <property type="entry name" value="Aerobactin siderophore biosynthesis protein iucC"/>
    <property type="match status" value="1"/>
</dbReference>
<dbReference type="Gene3D" id="1.10.510.40">
    <property type="match status" value="1"/>
</dbReference>
<dbReference type="Gene3D" id="3.30.310.280">
    <property type="match status" value="1"/>
</dbReference>
<dbReference type="Gene3D" id="6.10.250.3370">
    <property type="match status" value="1"/>
</dbReference>
<dbReference type="InterPro" id="IPR007310">
    <property type="entry name" value="Aerobactin_biosyn_IucA/IucC_N"/>
</dbReference>
<dbReference type="InterPro" id="IPR022770">
    <property type="entry name" value="IucA/IucC-like_C"/>
</dbReference>
<dbReference type="InterPro" id="IPR037455">
    <property type="entry name" value="LucA/IucC-like"/>
</dbReference>
<dbReference type="PANTHER" id="PTHR34384">
    <property type="entry name" value="L-2,3-DIAMINOPROPANOATE--CITRATE LIGASE"/>
    <property type="match status" value="1"/>
</dbReference>
<dbReference type="PANTHER" id="PTHR34384:SF6">
    <property type="entry name" value="STAPHYLOFERRIN B SYNTHASE"/>
    <property type="match status" value="1"/>
</dbReference>
<dbReference type="Pfam" id="PF06276">
    <property type="entry name" value="FhuF"/>
    <property type="match status" value="1"/>
</dbReference>
<dbReference type="Pfam" id="PF04183">
    <property type="entry name" value="IucA_IucC"/>
    <property type="match status" value="1"/>
</dbReference>
<sequence length="580" mass="66846">MNHKDWDLVNRRLVAKMLSELEYEQVFHAESQGDDRYCINLPGAQWRFIAERGIWGWLWIDAQTLRCADEPVLAQTLLMQLKQVLSMSDATVAEHMQDLYATLLGDLQLLKARRGLSASDLINLNADRLQCLLSGHPKFVFNKGRRGWGKEALERYAPEYANTFRLHWLAVKREHMIWRCDNEMDIHQLLTAAMDPQEFARFSQVWQENGLDHNWLPLPVHPWQWQEKIATDFIADFGEGRMVSLGEFGDQWLAQQSLRTLTNASRRGGLDIKLPLTIYNTSCYRGIPGRYIAAGPLASRWLQQVFATDATLVQSGAVILGEPAAGYVSHEGYAALARAPYRYQEMLGVIWRENPCRWLKPDESPFLMATLMEWDENNQPLAGAYIDRSGLDAETWLTQLFRVVVVPLYHLLCRYGVALIAHGQNITLAMKEGVPQRVLLKDFQGDMRLVKEEFPEMDSLPQEVRDVTSRLSADYLIHDLQTGHFVTVLRFISPLMVRLGVPERRFYQLLAAVLSDYMKKHPQMSERFALFSLFRPQIIRVVLNPVKLTWPDLDGGSRMLPNYLEDLQNPLWLVTQEYES</sequence>
<proteinExistence type="evidence at protein level"/>